<proteinExistence type="inferred from homology"/>
<reference key="1">
    <citation type="journal article" date="2005" name="Science">
        <title>Life at depth: Photobacterium profundum genome sequence and expression analysis.</title>
        <authorList>
            <person name="Vezzi A."/>
            <person name="Campanaro S."/>
            <person name="D'Angelo M."/>
            <person name="Simonato F."/>
            <person name="Vitulo N."/>
            <person name="Lauro F.M."/>
            <person name="Cestaro A."/>
            <person name="Malacrida G."/>
            <person name="Simionati B."/>
            <person name="Cannata N."/>
            <person name="Romualdi C."/>
            <person name="Bartlett D.H."/>
            <person name="Valle G."/>
        </authorList>
    </citation>
    <scope>NUCLEOTIDE SEQUENCE [LARGE SCALE GENOMIC DNA]</scope>
    <source>
        <strain>ATCC BAA-1253 / SS9</strain>
    </source>
</reference>
<accession>Q6LMU5</accession>
<organism>
    <name type="scientific">Photobacterium profundum (strain SS9)</name>
    <dbReference type="NCBI Taxonomy" id="298386"/>
    <lineage>
        <taxon>Bacteria</taxon>
        <taxon>Pseudomonadati</taxon>
        <taxon>Pseudomonadota</taxon>
        <taxon>Gammaproteobacteria</taxon>
        <taxon>Vibrionales</taxon>
        <taxon>Vibrionaceae</taxon>
        <taxon>Photobacterium</taxon>
    </lineage>
</organism>
<sequence length="65" mass="7184">MLILTRRVGETLMIGDEVTVTVLGVKGNQVRIGVNAPKEVSVHREEIYMRIQAEKENGTQGTGNF</sequence>
<comment type="function">
    <text evidence="1">A key translational regulator that binds mRNA to regulate translation initiation and/or mRNA stability. Mediates global changes in gene expression, shifting from rapid growth to stress survival by linking envelope stress, the stringent response and the catabolite repression systems. Usually binds in the 5'-UTR; binding at or near the Shine-Dalgarno sequence prevents ribosome-binding, repressing translation, binding elsewhere in the 5'-UTR can activate translation and/or stabilize the mRNA. Its function is antagonized by small RNA(s).</text>
</comment>
<comment type="subunit">
    <text evidence="1">Homodimer; the beta-strands of each monomer intercalate to form a hydrophobic core, while the alpha-helices form wings that extend away from the core.</text>
</comment>
<comment type="subcellular location">
    <subcellularLocation>
        <location evidence="1">Cytoplasm</location>
    </subcellularLocation>
</comment>
<comment type="similarity">
    <text evidence="1">Belongs to the CsrA/RsmA family.</text>
</comment>
<gene>
    <name evidence="1" type="primary">csrA</name>
    <name type="ordered locus">PBPRA3065</name>
</gene>
<evidence type="ECO:0000255" key="1">
    <source>
        <dbReference type="HAMAP-Rule" id="MF_00167"/>
    </source>
</evidence>
<protein>
    <recommendedName>
        <fullName evidence="1">Translational regulator CsrA</fullName>
    </recommendedName>
    <alternativeName>
        <fullName evidence="1">Carbon storage regulator</fullName>
    </alternativeName>
</protein>
<keyword id="KW-0010">Activator</keyword>
<keyword id="KW-0963">Cytoplasm</keyword>
<keyword id="KW-1185">Reference proteome</keyword>
<keyword id="KW-0678">Repressor</keyword>
<keyword id="KW-0694">RNA-binding</keyword>
<keyword id="KW-0810">Translation regulation</keyword>
<dbReference type="EMBL" id="CR378673">
    <property type="protein sequence ID" value="CAG21381.1"/>
    <property type="molecule type" value="Genomic_DNA"/>
</dbReference>
<dbReference type="RefSeq" id="WP_011219641.1">
    <property type="nucleotide sequence ID" value="NC_006370.1"/>
</dbReference>
<dbReference type="SMR" id="Q6LMU5"/>
<dbReference type="STRING" id="298386.PBPRA3065"/>
<dbReference type="KEGG" id="ppr:PBPRA3065"/>
<dbReference type="eggNOG" id="COG1551">
    <property type="taxonomic scope" value="Bacteria"/>
</dbReference>
<dbReference type="HOGENOM" id="CLU_164837_2_2_6"/>
<dbReference type="Proteomes" id="UP000000593">
    <property type="component" value="Chromosome 1"/>
</dbReference>
<dbReference type="GO" id="GO:0005829">
    <property type="term" value="C:cytosol"/>
    <property type="evidence" value="ECO:0007669"/>
    <property type="project" value="TreeGrafter"/>
</dbReference>
<dbReference type="GO" id="GO:0048027">
    <property type="term" value="F:mRNA 5'-UTR binding"/>
    <property type="evidence" value="ECO:0007669"/>
    <property type="project" value="UniProtKB-UniRule"/>
</dbReference>
<dbReference type="GO" id="GO:0006402">
    <property type="term" value="P:mRNA catabolic process"/>
    <property type="evidence" value="ECO:0007669"/>
    <property type="project" value="InterPro"/>
</dbReference>
<dbReference type="GO" id="GO:0045947">
    <property type="term" value="P:negative regulation of translational initiation"/>
    <property type="evidence" value="ECO:0007669"/>
    <property type="project" value="UniProtKB-UniRule"/>
</dbReference>
<dbReference type="GO" id="GO:0045948">
    <property type="term" value="P:positive regulation of translational initiation"/>
    <property type="evidence" value="ECO:0007669"/>
    <property type="project" value="UniProtKB-UniRule"/>
</dbReference>
<dbReference type="GO" id="GO:0006109">
    <property type="term" value="P:regulation of carbohydrate metabolic process"/>
    <property type="evidence" value="ECO:0007669"/>
    <property type="project" value="UniProtKB-UniRule"/>
</dbReference>
<dbReference type="FunFam" id="2.60.40.4380:FF:000001">
    <property type="entry name" value="Translational regulator CsrA"/>
    <property type="match status" value="1"/>
</dbReference>
<dbReference type="Gene3D" id="2.60.40.4380">
    <property type="entry name" value="Translational regulator CsrA"/>
    <property type="match status" value="1"/>
</dbReference>
<dbReference type="HAMAP" id="MF_00167">
    <property type="entry name" value="CsrA"/>
    <property type="match status" value="1"/>
</dbReference>
<dbReference type="InterPro" id="IPR003751">
    <property type="entry name" value="CsrA"/>
</dbReference>
<dbReference type="InterPro" id="IPR036107">
    <property type="entry name" value="CsrA_sf"/>
</dbReference>
<dbReference type="NCBIfam" id="TIGR00202">
    <property type="entry name" value="csrA"/>
    <property type="match status" value="1"/>
</dbReference>
<dbReference type="NCBIfam" id="NF002469">
    <property type="entry name" value="PRK01712.1"/>
    <property type="match status" value="1"/>
</dbReference>
<dbReference type="PANTHER" id="PTHR34984">
    <property type="entry name" value="CARBON STORAGE REGULATOR"/>
    <property type="match status" value="1"/>
</dbReference>
<dbReference type="PANTHER" id="PTHR34984:SF1">
    <property type="entry name" value="CARBON STORAGE REGULATOR"/>
    <property type="match status" value="1"/>
</dbReference>
<dbReference type="Pfam" id="PF02599">
    <property type="entry name" value="CsrA"/>
    <property type="match status" value="1"/>
</dbReference>
<dbReference type="SUPFAM" id="SSF117130">
    <property type="entry name" value="CsrA-like"/>
    <property type="match status" value="1"/>
</dbReference>
<feature type="chain" id="PRO_0000177078" description="Translational regulator CsrA">
    <location>
        <begin position="1"/>
        <end position="65"/>
    </location>
</feature>
<name>CSRA_PHOPR</name>